<organism>
    <name type="scientific">Schizosaccharomyces pombe (strain 972 / ATCC 24843)</name>
    <name type="common">Fission yeast</name>
    <dbReference type="NCBI Taxonomy" id="284812"/>
    <lineage>
        <taxon>Eukaryota</taxon>
        <taxon>Fungi</taxon>
        <taxon>Dikarya</taxon>
        <taxon>Ascomycota</taxon>
        <taxon>Taphrinomycotina</taxon>
        <taxon>Schizosaccharomycetes</taxon>
        <taxon>Schizosaccharomycetales</taxon>
        <taxon>Schizosaccharomycetaceae</taxon>
        <taxon>Schizosaccharomyces</taxon>
    </lineage>
</organism>
<name>RL22_SCHPO</name>
<comment type="function">
    <text evidence="1">Component of the ribosome, a large ribonucleoprotein complex responsible for the synthesis of proteins in the cell. The small ribosomal subunit (SSU) binds messenger RNAs (mRNAs) and translates the encoded message by selecting cognate aminoacyl-transfer RNA (tRNA) molecules. The large subunit (LSU) contains the ribosomal catalytic site termed the peptidyl transferase center (PTC), which catalyzes the formation of peptide bonds, thereby polymerizing the amino acids delivered by tRNAs into a polypeptide chain. The nascent polypeptides leave the ribosome through a tunnel in the LSU and interact with protein factors that function in enzymatic processing, targeting, and the membrane insertion of nascent chains at the exit of the ribosomal tunnel.</text>
</comment>
<comment type="subunit">
    <text evidence="1">Component of the large ribosomal subunit (LSU). Mature yeast ribosomes consist of a small (40S) and a large (60S) subunit. The 40S small subunit contains 1 molecule of ribosomal RNA (18S rRNA) and at least 33 different proteins. The large 60S subunit contains 3 rRNA molecules (25S, 5.8S and 5S rRNA) and at least 46 different proteins.</text>
</comment>
<comment type="subcellular location">
    <subcellularLocation>
        <location evidence="2">Cytoplasm</location>
    </subcellularLocation>
    <subcellularLocation>
        <location evidence="2">Nucleus</location>
        <location evidence="2">Nucleolus</location>
    </subcellularLocation>
</comment>
<comment type="similarity">
    <text evidence="4">Belongs to the eukaryotic ribosomal protein eL22 family.</text>
</comment>
<feature type="chain" id="PRO_0000215513" description="Large ribosomal subunit protein eL22">
    <location>
        <begin position="1"/>
        <end position="117"/>
    </location>
</feature>
<feature type="modified residue" description="Phosphoserine" evidence="3">
    <location>
        <position position="49"/>
    </location>
</feature>
<feature type="modified residue" description="Phosphoserine" evidence="3">
    <location>
        <position position="50"/>
    </location>
</feature>
<feature type="sequence conflict" description="In Ref. 2; BAA13074." evidence="4" ref="2">
    <original>Q</original>
    <variation>NKLAARNSCVFQN</variation>
    <location>
        <position position="117"/>
    </location>
</feature>
<feature type="strand" evidence="5">
    <location>
        <begin position="10"/>
        <end position="15"/>
    </location>
</feature>
<feature type="helix" evidence="5">
    <location>
        <begin position="17"/>
        <end position="22"/>
    </location>
</feature>
<feature type="helix" evidence="5">
    <location>
        <begin position="27"/>
        <end position="37"/>
    </location>
</feature>
<feature type="turn" evidence="5">
    <location>
        <begin position="45"/>
        <end position="50"/>
    </location>
</feature>
<feature type="strand" evidence="5">
    <location>
        <begin position="51"/>
        <end position="53"/>
    </location>
</feature>
<feature type="strand" evidence="5">
    <location>
        <begin position="60"/>
        <end position="67"/>
    </location>
</feature>
<feature type="helix" evidence="5">
    <location>
        <begin position="71"/>
        <end position="85"/>
    </location>
</feature>
<feature type="turn" evidence="5">
    <location>
        <begin position="88"/>
        <end position="90"/>
    </location>
</feature>
<feature type="strand" evidence="5">
    <location>
        <begin position="91"/>
        <end position="97"/>
    </location>
</feature>
<feature type="strand" evidence="5">
    <location>
        <begin position="100"/>
        <end position="105"/>
    </location>
</feature>
<protein>
    <recommendedName>
        <fullName evidence="4">Large ribosomal subunit protein eL22</fullName>
    </recommendedName>
    <alternativeName>
        <fullName>60S ribosomal protein L22</fullName>
    </alternativeName>
</protein>
<keyword id="KW-0002">3D-structure</keyword>
<keyword id="KW-0963">Cytoplasm</keyword>
<keyword id="KW-0539">Nucleus</keyword>
<keyword id="KW-0597">Phosphoprotein</keyword>
<keyword id="KW-1185">Reference proteome</keyword>
<keyword id="KW-0687">Ribonucleoprotein</keyword>
<keyword id="KW-0689">Ribosomal protein</keyword>
<sequence length="117" mass="13320">MVKKNTKVSNKYIIDATAAVNDKIFDVAAFEKYLIDRIKVDGKTGNLGSSVVVSREGSSKIAVIAHIDFSGRYLKYLTKKFLKKHSLRDWLRVVSTKKGVYELRYYNVVVGNDEEEQ</sequence>
<dbReference type="EMBL" id="CU329670">
    <property type="protein sequence ID" value="CAB11194.2"/>
    <property type="molecule type" value="Genomic_DNA"/>
</dbReference>
<dbReference type="EMBL" id="D86349">
    <property type="protein sequence ID" value="BAA13074.1"/>
    <property type="molecule type" value="mRNA"/>
</dbReference>
<dbReference type="PIR" id="T37543">
    <property type="entry name" value="T37543"/>
</dbReference>
<dbReference type="RefSeq" id="NP_594940.1">
    <property type="nucleotide sequence ID" value="NM_001020371.2"/>
</dbReference>
<dbReference type="PDB" id="8ESQ">
    <property type="method" value="EM"/>
    <property type="resolution" value="2.80 A"/>
    <property type="chains" value="U=1-117"/>
</dbReference>
<dbReference type="PDB" id="8ESR">
    <property type="method" value="EM"/>
    <property type="resolution" value="3.20 A"/>
    <property type="chains" value="U=1-117"/>
</dbReference>
<dbReference type="PDB" id="8ETC">
    <property type="method" value="EM"/>
    <property type="resolution" value="3.10 A"/>
    <property type="chains" value="U=1-117"/>
</dbReference>
<dbReference type="PDB" id="8ETG">
    <property type="method" value="EM"/>
    <property type="resolution" value="3.40 A"/>
    <property type="chains" value="U=1-117"/>
</dbReference>
<dbReference type="PDB" id="8EUG">
    <property type="method" value="EM"/>
    <property type="resolution" value="2.80 A"/>
    <property type="chains" value="U=1-117"/>
</dbReference>
<dbReference type="PDB" id="8EUI">
    <property type="method" value="EM"/>
    <property type="resolution" value="3.10 A"/>
    <property type="chains" value="U=1-117"/>
</dbReference>
<dbReference type="PDB" id="9AXT">
    <property type="method" value="EM"/>
    <property type="resolution" value="2.40 A"/>
    <property type="chains" value="Bg=1-117"/>
</dbReference>
<dbReference type="PDB" id="9AXU">
    <property type="method" value="EM"/>
    <property type="resolution" value="1.94 A"/>
    <property type="chains" value="g=1-117"/>
</dbReference>
<dbReference type="PDB" id="9AXV">
    <property type="method" value="EM"/>
    <property type="resolution" value="2.40 A"/>
    <property type="chains" value="Bg=1-117"/>
</dbReference>
<dbReference type="PDBsum" id="8ESQ"/>
<dbReference type="PDBsum" id="8ESR"/>
<dbReference type="PDBsum" id="8ETC"/>
<dbReference type="PDBsum" id="8ETG"/>
<dbReference type="PDBsum" id="8EUG"/>
<dbReference type="PDBsum" id="8EUI"/>
<dbReference type="PDBsum" id="9AXT"/>
<dbReference type="PDBsum" id="9AXU"/>
<dbReference type="PDBsum" id="9AXV"/>
<dbReference type="EMDB" id="EMD-43972"/>
<dbReference type="EMDB" id="EMD-43973"/>
<dbReference type="EMDB" id="EMD-43976"/>
<dbReference type="SMR" id="Q09668"/>
<dbReference type="BioGRID" id="279457">
    <property type="interactions" value="14"/>
</dbReference>
<dbReference type="FunCoup" id="Q09668">
    <property type="interactions" value="436"/>
</dbReference>
<dbReference type="IntAct" id="Q09668">
    <property type="interactions" value="1"/>
</dbReference>
<dbReference type="STRING" id="284812.Q09668"/>
<dbReference type="iPTMnet" id="Q09668"/>
<dbReference type="SwissPalm" id="Q09668"/>
<dbReference type="PaxDb" id="4896-SPAC11E3.15.1"/>
<dbReference type="EnsemblFungi" id="SPAC11E3.15.1">
    <property type="protein sequence ID" value="SPAC11E3.15.1:pep"/>
    <property type="gene ID" value="SPAC11E3.15"/>
</dbReference>
<dbReference type="GeneID" id="2543021"/>
<dbReference type="KEGG" id="spo:2543021"/>
<dbReference type="PomBase" id="SPAC11E3.15">
    <property type="gene designation" value="rpl22"/>
</dbReference>
<dbReference type="VEuPathDB" id="FungiDB:SPAC11E3.15"/>
<dbReference type="eggNOG" id="KOG3434">
    <property type="taxonomic scope" value="Eukaryota"/>
</dbReference>
<dbReference type="HOGENOM" id="CLU_105624_0_0_1"/>
<dbReference type="InParanoid" id="Q09668"/>
<dbReference type="OMA" id="YQLRFYN"/>
<dbReference type="PhylomeDB" id="Q09668"/>
<dbReference type="PRO" id="PR:Q09668"/>
<dbReference type="Proteomes" id="UP000002485">
    <property type="component" value="Chromosome I"/>
</dbReference>
<dbReference type="GO" id="GO:0005829">
    <property type="term" value="C:cytosol"/>
    <property type="evidence" value="ECO:0007005"/>
    <property type="project" value="PomBase"/>
</dbReference>
<dbReference type="GO" id="GO:0022625">
    <property type="term" value="C:cytosolic large ribosomal subunit"/>
    <property type="evidence" value="ECO:0000269"/>
    <property type="project" value="PomBase"/>
</dbReference>
<dbReference type="GO" id="GO:0005730">
    <property type="term" value="C:nucleolus"/>
    <property type="evidence" value="ECO:0007005"/>
    <property type="project" value="PomBase"/>
</dbReference>
<dbReference type="GO" id="GO:0030684">
    <property type="term" value="C:preribosome"/>
    <property type="evidence" value="ECO:0000314"/>
    <property type="project" value="PomBase"/>
</dbReference>
<dbReference type="GO" id="GO:0003723">
    <property type="term" value="F:RNA binding"/>
    <property type="evidence" value="ECO:0000318"/>
    <property type="project" value="GO_Central"/>
</dbReference>
<dbReference type="GO" id="GO:0003735">
    <property type="term" value="F:structural constituent of ribosome"/>
    <property type="evidence" value="ECO:0000318"/>
    <property type="project" value="GO_Central"/>
</dbReference>
<dbReference type="GO" id="GO:0002181">
    <property type="term" value="P:cytoplasmic translation"/>
    <property type="evidence" value="ECO:0000318"/>
    <property type="project" value="GO_Central"/>
</dbReference>
<dbReference type="FunFam" id="3.30.1360.210:FF:000001">
    <property type="entry name" value="60S ribosomal protein L22 1"/>
    <property type="match status" value="1"/>
</dbReference>
<dbReference type="Gene3D" id="3.30.1360.210">
    <property type="match status" value="1"/>
</dbReference>
<dbReference type="InterPro" id="IPR002671">
    <property type="entry name" value="Ribosomal_eL22"/>
</dbReference>
<dbReference type="InterPro" id="IPR038526">
    <property type="entry name" value="Ribosomal_eL22_sf"/>
</dbReference>
<dbReference type="PANTHER" id="PTHR10064">
    <property type="entry name" value="60S RIBOSOMAL PROTEIN L22"/>
    <property type="match status" value="1"/>
</dbReference>
<dbReference type="PANTHER" id="PTHR10064:SF31">
    <property type="entry name" value="LARGE RIBOSOMAL SUBUNIT PROTEIN EL22A-RELATED"/>
    <property type="match status" value="1"/>
</dbReference>
<dbReference type="Pfam" id="PF01776">
    <property type="entry name" value="Ribosomal_L22e"/>
    <property type="match status" value="1"/>
</dbReference>
<accession>Q09668</accession>
<accession>O13694</accession>
<accession>Q9UT13</accession>
<reference key="1">
    <citation type="journal article" date="2002" name="Nature">
        <title>The genome sequence of Schizosaccharomyces pombe.</title>
        <authorList>
            <person name="Wood V."/>
            <person name="Gwilliam R."/>
            <person name="Rajandream M.A."/>
            <person name="Lyne M.H."/>
            <person name="Lyne R."/>
            <person name="Stewart A."/>
            <person name="Sgouros J.G."/>
            <person name="Peat N."/>
            <person name="Hayles J."/>
            <person name="Baker S.G."/>
            <person name="Basham D."/>
            <person name="Bowman S."/>
            <person name="Brooks K."/>
            <person name="Brown D."/>
            <person name="Brown S."/>
            <person name="Chillingworth T."/>
            <person name="Churcher C.M."/>
            <person name="Collins M."/>
            <person name="Connor R."/>
            <person name="Cronin A."/>
            <person name="Davis P."/>
            <person name="Feltwell T."/>
            <person name="Fraser A."/>
            <person name="Gentles S."/>
            <person name="Goble A."/>
            <person name="Hamlin N."/>
            <person name="Harris D.E."/>
            <person name="Hidalgo J."/>
            <person name="Hodgson G."/>
            <person name="Holroyd S."/>
            <person name="Hornsby T."/>
            <person name="Howarth S."/>
            <person name="Huckle E.J."/>
            <person name="Hunt S."/>
            <person name="Jagels K."/>
            <person name="James K.D."/>
            <person name="Jones L."/>
            <person name="Jones M."/>
            <person name="Leather S."/>
            <person name="McDonald S."/>
            <person name="McLean J."/>
            <person name="Mooney P."/>
            <person name="Moule S."/>
            <person name="Mungall K.L."/>
            <person name="Murphy L.D."/>
            <person name="Niblett D."/>
            <person name="Odell C."/>
            <person name="Oliver K."/>
            <person name="O'Neil S."/>
            <person name="Pearson D."/>
            <person name="Quail M.A."/>
            <person name="Rabbinowitsch E."/>
            <person name="Rutherford K.M."/>
            <person name="Rutter S."/>
            <person name="Saunders D."/>
            <person name="Seeger K."/>
            <person name="Sharp S."/>
            <person name="Skelton J."/>
            <person name="Simmonds M.N."/>
            <person name="Squares R."/>
            <person name="Squares S."/>
            <person name="Stevens K."/>
            <person name="Taylor K."/>
            <person name="Taylor R.G."/>
            <person name="Tivey A."/>
            <person name="Walsh S.V."/>
            <person name="Warren T."/>
            <person name="Whitehead S."/>
            <person name="Woodward J.R."/>
            <person name="Volckaert G."/>
            <person name="Aert R."/>
            <person name="Robben J."/>
            <person name="Grymonprez B."/>
            <person name="Weltjens I."/>
            <person name="Vanstreels E."/>
            <person name="Rieger M."/>
            <person name="Schaefer M."/>
            <person name="Mueller-Auer S."/>
            <person name="Gabel C."/>
            <person name="Fuchs M."/>
            <person name="Duesterhoeft A."/>
            <person name="Fritzc C."/>
            <person name="Holzer E."/>
            <person name="Moestl D."/>
            <person name="Hilbert H."/>
            <person name="Borzym K."/>
            <person name="Langer I."/>
            <person name="Beck A."/>
            <person name="Lehrach H."/>
            <person name="Reinhardt R."/>
            <person name="Pohl T.M."/>
            <person name="Eger P."/>
            <person name="Zimmermann W."/>
            <person name="Wedler H."/>
            <person name="Wambutt R."/>
            <person name="Purnelle B."/>
            <person name="Goffeau A."/>
            <person name="Cadieu E."/>
            <person name="Dreano S."/>
            <person name="Gloux S."/>
            <person name="Lelaure V."/>
            <person name="Mottier S."/>
            <person name="Galibert F."/>
            <person name="Aves S.J."/>
            <person name="Xiang Z."/>
            <person name="Hunt C."/>
            <person name="Moore K."/>
            <person name="Hurst S.M."/>
            <person name="Lucas M."/>
            <person name="Rochet M."/>
            <person name="Gaillardin C."/>
            <person name="Tallada V.A."/>
            <person name="Garzon A."/>
            <person name="Thode G."/>
            <person name="Daga R.R."/>
            <person name="Cruzado L."/>
            <person name="Jimenez J."/>
            <person name="Sanchez M."/>
            <person name="del Rey F."/>
            <person name="Benito J."/>
            <person name="Dominguez A."/>
            <person name="Revuelta J.L."/>
            <person name="Moreno S."/>
            <person name="Armstrong J."/>
            <person name="Forsburg S.L."/>
            <person name="Cerutti L."/>
            <person name="Lowe T."/>
            <person name="McCombie W.R."/>
            <person name="Paulsen I."/>
            <person name="Potashkin J."/>
            <person name="Shpakovski G.V."/>
            <person name="Ussery D."/>
            <person name="Barrell B.G."/>
            <person name="Nurse P."/>
        </authorList>
    </citation>
    <scope>NUCLEOTIDE SEQUENCE [LARGE SCALE GENOMIC DNA]</scope>
    <source>
        <strain>972 / ATCC 24843</strain>
    </source>
</reference>
<reference key="2">
    <citation type="submission" date="1996-07" db="EMBL/GenBank/DDBJ databases">
        <authorList>
            <person name="Kawamukai M."/>
        </authorList>
    </citation>
    <scope>NUCLEOTIDE SEQUENCE [MRNA] OF 5-117</scope>
</reference>
<reference key="3">
    <citation type="journal article" date="2006" name="Nat. Biotechnol.">
        <title>ORFeome cloning and global analysis of protein localization in the fission yeast Schizosaccharomyces pombe.</title>
        <authorList>
            <person name="Matsuyama A."/>
            <person name="Arai R."/>
            <person name="Yashiroda Y."/>
            <person name="Shirai A."/>
            <person name="Kamata A."/>
            <person name="Sekido S."/>
            <person name="Kobayashi Y."/>
            <person name="Hashimoto A."/>
            <person name="Hamamoto M."/>
            <person name="Hiraoka Y."/>
            <person name="Horinouchi S."/>
            <person name="Yoshida M."/>
        </authorList>
    </citation>
    <scope>SUBCELLULAR LOCATION [LARGE SCALE ANALYSIS]</scope>
</reference>
<reference key="4">
    <citation type="journal article" date="2008" name="J. Proteome Res.">
        <title>Phosphoproteome analysis of fission yeast.</title>
        <authorList>
            <person name="Wilson-Grady J.T."/>
            <person name="Villen J."/>
            <person name="Gygi S.P."/>
        </authorList>
    </citation>
    <scope>PHOSPHORYLATION [LARGE SCALE ANALYSIS] AT SER-49 AND SER-50</scope>
    <scope>IDENTIFICATION BY MASS SPECTROMETRY</scope>
</reference>
<proteinExistence type="evidence at protein level"/>
<evidence type="ECO:0000250" key="1">
    <source>
        <dbReference type="UniProtKB" id="P05749"/>
    </source>
</evidence>
<evidence type="ECO:0000269" key="2">
    <source>
    </source>
</evidence>
<evidence type="ECO:0000269" key="3">
    <source>
    </source>
</evidence>
<evidence type="ECO:0000305" key="4"/>
<evidence type="ECO:0007829" key="5">
    <source>
        <dbReference type="PDB" id="8ETC"/>
    </source>
</evidence>
<gene>
    <name type="primary">rpl22</name>
    <name type="ORF">SPAC11E3.15</name>
    <name type="ORF">SPAP8A3.01</name>
</gene>